<comment type="similarity">
    <text evidence="1">Belongs to the bacterial ribosomal protein bL28 family.</text>
</comment>
<organism>
    <name type="scientific">Exiguobacterium sibiricum (strain DSM 17290 / CCUG 55495 / CIP 109462 / JCM 13490 / 255-15)</name>
    <dbReference type="NCBI Taxonomy" id="262543"/>
    <lineage>
        <taxon>Bacteria</taxon>
        <taxon>Bacillati</taxon>
        <taxon>Bacillota</taxon>
        <taxon>Bacilli</taxon>
        <taxon>Bacillales</taxon>
        <taxon>Bacillales Family XII. Incertae Sedis</taxon>
        <taxon>Exiguobacterium</taxon>
    </lineage>
</organism>
<sequence length="62" mass="6962">MARKCYVTGKSPKSGNNRSHALNKTKRTWGINVQKVRILVDGKPKKVWVSARALKSGKVERV</sequence>
<reference key="1">
    <citation type="submission" date="2008-04" db="EMBL/GenBank/DDBJ databases">
        <title>Complete sequence of chromosome of Exiguobacterium sibiricum 255-15.</title>
        <authorList>
            <consortium name="US DOE Joint Genome Institute"/>
            <person name="Copeland A."/>
            <person name="Lucas S."/>
            <person name="Lapidus A."/>
            <person name="Glavina del Rio T."/>
            <person name="Dalin E."/>
            <person name="Tice H."/>
            <person name="Bruce D."/>
            <person name="Goodwin L."/>
            <person name="Pitluck S."/>
            <person name="Kiss H."/>
            <person name="Chertkov O."/>
            <person name="Monk C."/>
            <person name="Brettin T."/>
            <person name="Detter J.C."/>
            <person name="Han C."/>
            <person name="Kuske C.R."/>
            <person name="Schmutz J."/>
            <person name="Larimer F."/>
            <person name="Land M."/>
            <person name="Hauser L."/>
            <person name="Kyrpides N."/>
            <person name="Mikhailova N."/>
            <person name="Vishnivetskaya T."/>
            <person name="Rodrigues D.F."/>
            <person name="Gilichinsky D."/>
            <person name="Tiedje J."/>
            <person name="Richardson P."/>
        </authorList>
    </citation>
    <scope>NUCLEOTIDE SEQUENCE [LARGE SCALE GENOMIC DNA]</scope>
    <source>
        <strain>DSM 17290 / CCUG 55495 / CIP 109462 / JCM 13490 / 255-15</strain>
    </source>
</reference>
<proteinExistence type="inferred from homology"/>
<accession>B1YIP3</accession>
<dbReference type="EMBL" id="CP001022">
    <property type="protein sequence ID" value="ACB61369.1"/>
    <property type="molecule type" value="Genomic_DNA"/>
</dbReference>
<dbReference type="SMR" id="B1YIP3"/>
<dbReference type="STRING" id="262543.Exig_1917"/>
<dbReference type="KEGG" id="esi:Exig_1917"/>
<dbReference type="eggNOG" id="COG0227">
    <property type="taxonomic scope" value="Bacteria"/>
</dbReference>
<dbReference type="HOGENOM" id="CLU_064548_7_1_9"/>
<dbReference type="OrthoDB" id="9805609at2"/>
<dbReference type="Proteomes" id="UP000001681">
    <property type="component" value="Chromosome"/>
</dbReference>
<dbReference type="GO" id="GO:1990904">
    <property type="term" value="C:ribonucleoprotein complex"/>
    <property type="evidence" value="ECO:0007669"/>
    <property type="project" value="UniProtKB-KW"/>
</dbReference>
<dbReference type="GO" id="GO:0005840">
    <property type="term" value="C:ribosome"/>
    <property type="evidence" value="ECO:0007669"/>
    <property type="project" value="UniProtKB-KW"/>
</dbReference>
<dbReference type="GO" id="GO:0003735">
    <property type="term" value="F:structural constituent of ribosome"/>
    <property type="evidence" value="ECO:0007669"/>
    <property type="project" value="InterPro"/>
</dbReference>
<dbReference type="GO" id="GO:0006412">
    <property type="term" value="P:translation"/>
    <property type="evidence" value="ECO:0007669"/>
    <property type="project" value="UniProtKB-UniRule"/>
</dbReference>
<dbReference type="Gene3D" id="2.30.170.40">
    <property type="entry name" value="Ribosomal protein L28/L24"/>
    <property type="match status" value="1"/>
</dbReference>
<dbReference type="HAMAP" id="MF_00373">
    <property type="entry name" value="Ribosomal_bL28"/>
    <property type="match status" value="1"/>
</dbReference>
<dbReference type="InterPro" id="IPR050096">
    <property type="entry name" value="Bacterial_rp_bL28"/>
</dbReference>
<dbReference type="InterPro" id="IPR026569">
    <property type="entry name" value="Ribosomal_bL28"/>
</dbReference>
<dbReference type="InterPro" id="IPR034704">
    <property type="entry name" value="Ribosomal_bL28/bL31-like_sf"/>
</dbReference>
<dbReference type="InterPro" id="IPR001383">
    <property type="entry name" value="Ribosomal_bL28_bact-type"/>
</dbReference>
<dbReference type="InterPro" id="IPR037147">
    <property type="entry name" value="Ribosomal_bL28_sf"/>
</dbReference>
<dbReference type="NCBIfam" id="TIGR00009">
    <property type="entry name" value="L28"/>
    <property type="match status" value="1"/>
</dbReference>
<dbReference type="PANTHER" id="PTHR39080">
    <property type="entry name" value="50S RIBOSOMAL PROTEIN L28"/>
    <property type="match status" value="1"/>
</dbReference>
<dbReference type="PANTHER" id="PTHR39080:SF1">
    <property type="entry name" value="LARGE RIBOSOMAL SUBUNIT PROTEIN BL28A"/>
    <property type="match status" value="1"/>
</dbReference>
<dbReference type="Pfam" id="PF00830">
    <property type="entry name" value="Ribosomal_L28"/>
    <property type="match status" value="1"/>
</dbReference>
<dbReference type="SUPFAM" id="SSF143800">
    <property type="entry name" value="L28p-like"/>
    <property type="match status" value="1"/>
</dbReference>
<feature type="chain" id="PRO_1000121636" description="Large ribosomal subunit protein bL28">
    <location>
        <begin position="1"/>
        <end position="62"/>
    </location>
</feature>
<feature type="region of interest" description="Disordered" evidence="2">
    <location>
        <begin position="1"/>
        <end position="26"/>
    </location>
</feature>
<feature type="compositionally biased region" description="Polar residues" evidence="2">
    <location>
        <begin position="11"/>
        <end position="20"/>
    </location>
</feature>
<keyword id="KW-1185">Reference proteome</keyword>
<keyword id="KW-0687">Ribonucleoprotein</keyword>
<keyword id="KW-0689">Ribosomal protein</keyword>
<gene>
    <name evidence="1" type="primary">rpmB</name>
    <name type="ordered locus">Exig_1917</name>
</gene>
<name>RL28_EXIS2</name>
<evidence type="ECO:0000255" key="1">
    <source>
        <dbReference type="HAMAP-Rule" id="MF_00373"/>
    </source>
</evidence>
<evidence type="ECO:0000256" key="2">
    <source>
        <dbReference type="SAM" id="MobiDB-lite"/>
    </source>
</evidence>
<evidence type="ECO:0000305" key="3"/>
<protein>
    <recommendedName>
        <fullName evidence="1">Large ribosomal subunit protein bL28</fullName>
    </recommendedName>
    <alternativeName>
        <fullName evidence="3">50S ribosomal protein L28</fullName>
    </alternativeName>
</protein>